<keyword id="KW-1185">Reference proteome</keyword>
<dbReference type="EMBL" id="AF303741">
    <property type="protein sequence ID" value="AAB94478.1"/>
    <property type="molecule type" value="Genomic_DNA"/>
</dbReference>
<dbReference type="PIR" id="T03180">
    <property type="entry name" value="T03180"/>
</dbReference>
<dbReference type="RefSeq" id="NP_149642.1">
    <property type="nucleotide sequence ID" value="NC_003038.1"/>
</dbReference>
<dbReference type="SMR" id="O55767"/>
<dbReference type="KEGG" id="vg:1732967"/>
<dbReference type="OrthoDB" id="970at10239"/>
<dbReference type="Proteomes" id="UP000001359">
    <property type="component" value="Genome"/>
</dbReference>
<dbReference type="GO" id="GO:0004672">
    <property type="term" value="F:protein kinase activity"/>
    <property type="evidence" value="ECO:0007669"/>
    <property type="project" value="InterPro"/>
</dbReference>
<dbReference type="Gene3D" id="1.10.510.10">
    <property type="entry name" value="Transferase(Phosphotransferase) domain 1"/>
    <property type="match status" value="1"/>
</dbReference>
<dbReference type="InterPro" id="IPR006598">
    <property type="entry name" value="CAP10"/>
</dbReference>
<dbReference type="InterPro" id="IPR011009">
    <property type="entry name" value="Kinase-like_dom_sf"/>
</dbReference>
<dbReference type="InterPro" id="IPR051091">
    <property type="entry name" value="O-Glucosyltr/Glycosyltrsf_90"/>
</dbReference>
<dbReference type="InterPro" id="IPR008266">
    <property type="entry name" value="Tyr_kinase_AS"/>
</dbReference>
<dbReference type="PANTHER" id="PTHR12203:SF119">
    <property type="entry name" value="GLYCOSYL TRANSFERASE CAP10 DOMAIN-CONTAINING PROTEIN"/>
    <property type="match status" value="1"/>
</dbReference>
<dbReference type="PANTHER" id="PTHR12203">
    <property type="entry name" value="KDEL LYS-ASP-GLU-LEU CONTAINING - RELATED"/>
    <property type="match status" value="1"/>
</dbReference>
<dbReference type="Pfam" id="PF05686">
    <property type="entry name" value="Glyco_transf_90"/>
    <property type="match status" value="1"/>
</dbReference>
<dbReference type="SMART" id="SM00672">
    <property type="entry name" value="CAP10"/>
    <property type="match status" value="1"/>
</dbReference>
<dbReference type="SUPFAM" id="SSF56112">
    <property type="entry name" value="Protein kinase-like (PK-like)"/>
    <property type="match status" value="1"/>
</dbReference>
<accession>O55767</accession>
<proteinExistence type="predicted"/>
<feature type="chain" id="PRO_0000377763" description="Uncharacterized protein 179R">
    <location>
        <begin position="1"/>
        <end position="1186"/>
    </location>
</feature>
<reference key="1">
    <citation type="journal article" date="2001" name="Virology">
        <title>Analysis of the first complete DNA sequence of an invertebrate iridovirus: coding strategy of the genome of Chilo iridescent virus.</title>
        <authorList>
            <person name="Jakob N.J."/>
            <person name="Mueller K."/>
            <person name="Bahr U."/>
            <person name="Darai G."/>
        </authorList>
    </citation>
    <scope>NUCLEOTIDE SEQUENCE [LARGE SCALE GENOMIC DNA]</scope>
</reference>
<reference key="2">
    <citation type="journal article" date="2007" name="Virol. J.">
        <title>Comparative genomic analysis of the family Iridoviridae: re-annotating and defining the core set of iridovirus genes.</title>
        <authorList>
            <person name="Eaton H.E."/>
            <person name="Metcalf J."/>
            <person name="Penny E."/>
            <person name="Tcherepanov V."/>
            <person name="Upton C."/>
            <person name="Brunetti C.R."/>
        </authorList>
    </citation>
    <scope>GENOME REANNOTATION</scope>
</reference>
<organismHost>
    <name type="scientific">Acheta domesticus</name>
    <name type="common">House cricket</name>
    <dbReference type="NCBI Taxonomy" id="6997"/>
</organismHost>
<organismHost>
    <name type="scientific">Chilo suppressalis</name>
    <name type="common">Asiatic rice borer moth</name>
    <dbReference type="NCBI Taxonomy" id="168631"/>
</organismHost>
<organismHost>
    <name type="scientific">Gryllus bimaculatus</name>
    <name type="common">Two-spotted cricket</name>
    <dbReference type="NCBI Taxonomy" id="6999"/>
</organismHost>
<organismHost>
    <name type="scientific">Gryllus campestris</name>
    <dbReference type="NCBI Taxonomy" id="58607"/>
</organismHost>
<organismHost>
    <name type="scientific">Spodoptera frugiperda</name>
    <name type="common">Fall armyworm</name>
    <dbReference type="NCBI Taxonomy" id="7108"/>
</organismHost>
<organism>
    <name type="scientific">Invertebrate iridescent virus 6</name>
    <name type="common">IIV-6</name>
    <name type="synonym">Chilo iridescent virus</name>
    <dbReference type="NCBI Taxonomy" id="176652"/>
    <lineage>
        <taxon>Viruses</taxon>
        <taxon>Varidnaviria</taxon>
        <taxon>Bamfordvirae</taxon>
        <taxon>Nucleocytoviricota</taxon>
        <taxon>Megaviricetes</taxon>
        <taxon>Pimascovirales</taxon>
        <taxon>Iridoviridae</taxon>
        <taxon>Betairidovirinae</taxon>
        <taxon>Iridovirus</taxon>
    </lineage>
</organism>
<gene>
    <name type="ORF">IIV6-179R</name>
</gene>
<sequence length="1186" mass="138021">MTCLDPKTIWPNEAVPNVRYRDFSKMVLFTAGDEDQFERKRSYKNGTNPDKKVSLDGNIWTNLFVPNEGLETEFWNGYNLNASSTINTFDYMFNKFKKGIFVKIVDNKVVTFLPFSKHGYKNDWGDLMKYDPSKYKSMIDFMRHVSNQTAIANNKNYKFKPDQVSRYTNQWYSNNCLIRYEHPLSEGDTNVVTLRHMFDELCATREVPDIELFINRRDFPLLTKNGTEPYYNIFGKDHSLDSKSLKLISEGMCPILSMCTSDMYADIVIPTHEDWARVASTEGVKTHVGDKENNENSLPKKITFPPQCKDYSKDNFNTPWEKRIPTAVFRGGSTGCGVSSDTNLETFNQRLVAAKISYNSKPDKYNVPLITAGITKWNLRPRKILNEKYLQTINIEKEAPKVSPLTPEEQSKYKYIINIDGHVSAFRLSLEMSMGCCILLVKSKIPNETFGWKMWFSHLLKPYIHYVPVKSDLSDLIEKIQWCRDNDEKCKEISQEALKFYQTYLSRESILDYMQNLMVKLKLSFPTNEIVYGTDPLFIQNSVQSKYLFNMMNNSINPIFPFLTPYLIPKPIPIYNILGTSLRGSYGWSKGYSMFLKHMFKPTIPKEKDNLKENANQNERKLNEKLNEESRVFTENQQENDWEMKRSTINLKGVFEKRLFENKKSTVDLYSISGSNVVKKSTSDAQGMIEHINEAFISDTCINNLLKIIPNFAWSFAFEKSLNENGVEQCTLLNEYIEGETFSTSIKNKMSYLGFSSGKPFKNVLEVLFQIILSIQFAQEQCGFIHNDLTPWNIIIQTLKEPITIQYPLFSGIYKIITKHVPVIIDYGKSHVATSPYGDFCFNELSVGNVIHYGVVNMFNMIECQDVFSIILYSCLDMLTVNGTKFSQRENDETEYDEQSIIKMLNFFSPTELKTRKEALSFIYQYKKYENLIKAHETINLEKSPIEFIKYFTSIFKKEKVVYGLSRLDSKRTGLIMDFNNPKQIFDEAFAQNIQEVYISFLNVPQNLYKCTLPQPKTKIELYMVAQLLIKCLKDTLKDYRIFAEKSSLRKESFHNDIIKFENAINFITTFYSKEISKHGNDSWVIPELCENNQIEISRNYFRTTSDTLNYSIKPCTDLTFFKKTILNILNWTDDEGLFEIKAEDRVEISTQLKFVLESTFKDKKISANNNTYIVYKKYCNKKYCI</sequence>
<protein>
    <recommendedName>
        <fullName>Uncharacterized protein 179R</fullName>
    </recommendedName>
</protein>
<name>VF179_IIV6</name>